<evidence type="ECO:0000255" key="1">
    <source>
        <dbReference type="HAMAP-Rule" id="MF_00407"/>
    </source>
</evidence>
<gene>
    <name evidence="1" type="primary">lig</name>
    <name type="ordered locus">Mpal_2781</name>
</gene>
<comment type="function">
    <text evidence="1">DNA ligase that seals nicks in double-stranded DNA during DNA replication, DNA recombination and DNA repair.</text>
</comment>
<comment type="catalytic activity">
    <reaction evidence="1">
        <text>ATP + (deoxyribonucleotide)n-3'-hydroxyl + 5'-phospho-(deoxyribonucleotide)m = (deoxyribonucleotide)n+m + AMP + diphosphate.</text>
        <dbReference type="EC" id="6.5.1.1"/>
    </reaction>
</comment>
<comment type="cofactor">
    <cofactor evidence="1">
        <name>Mg(2+)</name>
        <dbReference type="ChEBI" id="CHEBI:18420"/>
    </cofactor>
</comment>
<comment type="similarity">
    <text evidence="1">Belongs to the ATP-dependent DNA ligase family.</text>
</comment>
<reference key="1">
    <citation type="journal article" date="2015" name="Genome Announc.">
        <title>Complete Genome Sequence of Methanosphaerula palustris E1-9CT, a Hydrogenotrophic Methanogen Isolated from a Minerotrophic Fen Peatland.</title>
        <authorList>
            <person name="Cadillo-Quiroz H."/>
            <person name="Browne P."/>
            <person name="Kyrpides N."/>
            <person name="Woyke T."/>
            <person name="Goodwin L."/>
            <person name="Detter C."/>
            <person name="Yavitt J.B."/>
            <person name="Zinder S.H."/>
        </authorList>
    </citation>
    <scope>NUCLEOTIDE SEQUENCE [LARGE SCALE GENOMIC DNA]</scope>
    <source>
        <strain>ATCC BAA-1556 / DSM 19958 / E1-9c</strain>
    </source>
</reference>
<keyword id="KW-0067">ATP-binding</keyword>
<keyword id="KW-0131">Cell cycle</keyword>
<keyword id="KW-0132">Cell division</keyword>
<keyword id="KW-0227">DNA damage</keyword>
<keyword id="KW-0233">DNA recombination</keyword>
<keyword id="KW-0234">DNA repair</keyword>
<keyword id="KW-0235">DNA replication</keyword>
<keyword id="KW-0436">Ligase</keyword>
<keyword id="KW-0460">Magnesium</keyword>
<keyword id="KW-0479">Metal-binding</keyword>
<keyword id="KW-0547">Nucleotide-binding</keyword>
<keyword id="KW-1185">Reference proteome</keyword>
<organism>
    <name type="scientific">Methanosphaerula palustris (strain ATCC BAA-1556 / DSM 19958 / E1-9c)</name>
    <dbReference type="NCBI Taxonomy" id="521011"/>
    <lineage>
        <taxon>Archaea</taxon>
        <taxon>Methanobacteriati</taxon>
        <taxon>Methanobacteriota</taxon>
        <taxon>Stenosarchaea group</taxon>
        <taxon>Methanomicrobia</taxon>
        <taxon>Methanomicrobiales</taxon>
        <taxon>Methanoregulaceae</taxon>
        <taxon>Methanosphaerula</taxon>
    </lineage>
</organism>
<dbReference type="EC" id="6.5.1.1" evidence="1"/>
<dbReference type="EMBL" id="CP001338">
    <property type="protein sequence ID" value="ACL18036.1"/>
    <property type="molecule type" value="Genomic_DNA"/>
</dbReference>
<dbReference type="RefSeq" id="WP_012619355.1">
    <property type="nucleotide sequence ID" value="NC_011832.1"/>
</dbReference>
<dbReference type="SMR" id="B8GGB8"/>
<dbReference type="STRING" id="521011.Mpal_2781"/>
<dbReference type="GeneID" id="7272662"/>
<dbReference type="KEGG" id="mpl:Mpal_2781"/>
<dbReference type="eggNOG" id="arCOG01347">
    <property type="taxonomic scope" value="Archaea"/>
</dbReference>
<dbReference type="HOGENOM" id="CLU_005138_6_0_2"/>
<dbReference type="OrthoDB" id="31274at2157"/>
<dbReference type="Proteomes" id="UP000002457">
    <property type="component" value="Chromosome"/>
</dbReference>
<dbReference type="GO" id="GO:0005524">
    <property type="term" value="F:ATP binding"/>
    <property type="evidence" value="ECO:0007669"/>
    <property type="project" value="UniProtKB-UniRule"/>
</dbReference>
<dbReference type="GO" id="GO:0003677">
    <property type="term" value="F:DNA binding"/>
    <property type="evidence" value="ECO:0007669"/>
    <property type="project" value="InterPro"/>
</dbReference>
<dbReference type="GO" id="GO:0003910">
    <property type="term" value="F:DNA ligase (ATP) activity"/>
    <property type="evidence" value="ECO:0007669"/>
    <property type="project" value="UniProtKB-UniRule"/>
</dbReference>
<dbReference type="GO" id="GO:0046872">
    <property type="term" value="F:metal ion binding"/>
    <property type="evidence" value="ECO:0007669"/>
    <property type="project" value="UniProtKB-KW"/>
</dbReference>
<dbReference type="GO" id="GO:0051301">
    <property type="term" value="P:cell division"/>
    <property type="evidence" value="ECO:0007669"/>
    <property type="project" value="UniProtKB-KW"/>
</dbReference>
<dbReference type="GO" id="GO:0071897">
    <property type="term" value="P:DNA biosynthetic process"/>
    <property type="evidence" value="ECO:0007669"/>
    <property type="project" value="InterPro"/>
</dbReference>
<dbReference type="GO" id="GO:0006310">
    <property type="term" value="P:DNA recombination"/>
    <property type="evidence" value="ECO:0007669"/>
    <property type="project" value="UniProtKB-UniRule"/>
</dbReference>
<dbReference type="GO" id="GO:0006281">
    <property type="term" value="P:DNA repair"/>
    <property type="evidence" value="ECO:0007669"/>
    <property type="project" value="UniProtKB-UniRule"/>
</dbReference>
<dbReference type="GO" id="GO:0006273">
    <property type="term" value="P:lagging strand elongation"/>
    <property type="evidence" value="ECO:0007669"/>
    <property type="project" value="TreeGrafter"/>
</dbReference>
<dbReference type="CDD" id="cd07901">
    <property type="entry name" value="Adenylation_DNA_ligase_Arch_LigB"/>
    <property type="match status" value="1"/>
</dbReference>
<dbReference type="CDD" id="cd07972">
    <property type="entry name" value="OBF_DNA_ligase_Arch_LigB"/>
    <property type="match status" value="1"/>
</dbReference>
<dbReference type="Gene3D" id="1.10.3260.10">
    <property type="entry name" value="DNA ligase, ATP-dependent, N-terminal domain"/>
    <property type="match status" value="1"/>
</dbReference>
<dbReference type="Gene3D" id="3.30.470.30">
    <property type="entry name" value="DNA ligase/mRNA capping enzyme"/>
    <property type="match status" value="1"/>
</dbReference>
<dbReference type="Gene3D" id="2.40.50.140">
    <property type="entry name" value="Nucleic acid-binding proteins"/>
    <property type="match status" value="1"/>
</dbReference>
<dbReference type="HAMAP" id="MF_00407">
    <property type="entry name" value="DNA_ligase"/>
    <property type="match status" value="1"/>
</dbReference>
<dbReference type="InterPro" id="IPR050191">
    <property type="entry name" value="ATP-dep_DNA_ligase"/>
</dbReference>
<dbReference type="InterPro" id="IPR022865">
    <property type="entry name" value="DNA_ligae_ATP-dep_bac/arc"/>
</dbReference>
<dbReference type="InterPro" id="IPR000977">
    <property type="entry name" value="DNA_ligase_ATP-dep"/>
</dbReference>
<dbReference type="InterPro" id="IPR012309">
    <property type="entry name" value="DNA_ligase_ATP-dep_C"/>
</dbReference>
<dbReference type="InterPro" id="IPR012310">
    <property type="entry name" value="DNA_ligase_ATP-dep_cent"/>
</dbReference>
<dbReference type="InterPro" id="IPR012308">
    <property type="entry name" value="DNA_ligase_ATP-dep_N"/>
</dbReference>
<dbReference type="InterPro" id="IPR036599">
    <property type="entry name" value="DNA_ligase_N_sf"/>
</dbReference>
<dbReference type="InterPro" id="IPR012340">
    <property type="entry name" value="NA-bd_OB-fold"/>
</dbReference>
<dbReference type="NCBIfam" id="TIGR00574">
    <property type="entry name" value="dnl1"/>
    <property type="match status" value="1"/>
</dbReference>
<dbReference type="PANTHER" id="PTHR45674:SF7">
    <property type="entry name" value="DNA LIGASE"/>
    <property type="match status" value="1"/>
</dbReference>
<dbReference type="PANTHER" id="PTHR45674">
    <property type="entry name" value="DNA LIGASE 1/3 FAMILY MEMBER"/>
    <property type="match status" value="1"/>
</dbReference>
<dbReference type="Pfam" id="PF04679">
    <property type="entry name" value="DNA_ligase_A_C"/>
    <property type="match status" value="1"/>
</dbReference>
<dbReference type="Pfam" id="PF01068">
    <property type="entry name" value="DNA_ligase_A_M"/>
    <property type="match status" value="1"/>
</dbReference>
<dbReference type="Pfam" id="PF04675">
    <property type="entry name" value="DNA_ligase_A_N"/>
    <property type="match status" value="1"/>
</dbReference>
<dbReference type="SUPFAM" id="SSF117018">
    <property type="entry name" value="ATP-dependent DNA ligase DNA-binding domain"/>
    <property type="match status" value="1"/>
</dbReference>
<dbReference type="SUPFAM" id="SSF56091">
    <property type="entry name" value="DNA ligase/mRNA capping enzyme, catalytic domain"/>
    <property type="match status" value="1"/>
</dbReference>
<dbReference type="SUPFAM" id="SSF50249">
    <property type="entry name" value="Nucleic acid-binding proteins"/>
    <property type="match status" value="1"/>
</dbReference>
<dbReference type="PROSITE" id="PS50160">
    <property type="entry name" value="DNA_LIGASE_A3"/>
    <property type="match status" value="1"/>
</dbReference>
<accession>B8GGB8</accession>
<proteinExistence type="inferred from homology"/>
<protein>
    <recommendedName>
        <fullName evidence="1">DNA ligase</fullName>
        <ecNumber evidence="1">6.5.1.1</ecNumber>
    </recommendedName>
    <alternativeName>
        <fullName evidence="1">Polydeoxyribonucleotide synthase [ATP]</fullName>
    </alternativeName>
</protein>
<name>DNLI_METPE</name>
<sequence length="556" mass="61297">MQFSIFAQTCAALEAQNGRLEMKHAISVILPSLSGEDLPIFIRFLMGKIFPDWSPQKLGIGPNLLYEAVAYVAGTKKTALVDLINRTGDAGLAIEQFLATKEQTAFFTEDPSLAEVYAACTRIAASAGGRSQRERLLVLRQLFGNVSPFEARYLARLILGELRIGIGEGTVRDAIAEAYTVEPAQVEHAMQALNDLGEVALRAREGEEGLIHLSIAPFRPVKMMLAQAGTTIPEMLAAHGEVAVEFKYDGTRFQFHKEGKTCRIYSRKLEEVTDAVPEVGEALLGATDHDVILDGEVIAIGADGRPLPFQTVLRRFRRKHGIAAAREAITLVPRVFDILYRDGETLIDLPFQSRRAILSATIGPEYLAPQQVLSSAEAVDLLYLEAMAEGHEGVMLKDLLSLYSPGVRGKHWVKIKPEVETLDLVVIGAEWGEGRRARTFGSFLLACLDQGVFRAVSKVATGISDEQLQELYTLFKDQVIAESGNTVTFEPTVIFEVGYAEIQKSPSYESGYALRFPRFVQVRDDKAVEEIETLESLTTRYLAQKTQANGQPEFTL</sequence>
<feature type="chain" id="PRO_1000134728" description="DNA ligase">
    <location>
        <begin position="1"/>
        <end position="556"/>
    </location>
</feature>
<feature type="active site" description="N6-AMP-lysine intermediate" evidence="1">
    <location>
        <position position="247"/>
    </location>
</feature>
<feature type="binding site" evidence="1">
    <location>
        <position position="245"/>
    </location>
    <ligand>
        <name>ATP</name>
        <dbReference type="ChEBI" id="CHEBI:30616"/>
    </ligand>
</feature>
<feature type="binding site" evidence="1">
    <location>
        <position position="252"/>
    </location>
    <ligand>
        <name>ATP</name>
        <dbReference type="ChEBI" id="CHEBI:30616"/>
    </ligand>
</feature>
<feature type="binding site" evidence="1">
    <location>
        <position position="267"/>
    </location>
    <ligand>
        <name>ATP</name>
        <dbReference type="ChEBI" id="CHEBI:30616"/>
    </ligand>
</feature>
<feature type="binding site" evidence="1">
    <location>
        <position position="296"/>
    </location>
    <ligand>
        <name>ATP</name>
        <dbReference type="ChEBI" id="CHEBI:30616"/>
    </ligand>
</feature>
<feature type="binding site" evidence="1">
    <location>
        <position position="336"/>
    </location>
    <ligand>
        <name>ATP</name>
        <dbReference type="ChEBI" id="CHEBI:30616"/>
    </ligand>
</feature>
<feature type="binding site" evidence="1">
    <location>
        <position position="408"/>
    </location>
    <ligand>
        <name>ATP</name>
        <dbReference type="ChEBI" id="CHEBI:30616"/>
    </ligand>
</feature>
<feature type="binding site" evidence="1">
    <location>
        <position position="414"/>
    </location>
    <ligand>
        <name>ATP</name>
        <dbReference type="ChEBI" id="CHEBI:30616"/>
    </ligand>
</feature>